<organism>
    <name type="scientific">Arabidopsis thaliana</name>
    <name type="common">Mouse-ear cress</name>
    <dbReference type="NCBI Taxonomy" id="3702"/>
    <lineage>
        <taxon>Eukaryota</taxon>
        <taxon>Viridiplantae</taxon>
        <taxon>Streptophyta</taxon>
        <taxon>Embryophyta</taxon>
        <taxon>Tracheophyta</taxon>
        <taxon>Spermatophyta</taxon>
        <taxon>Magnoliopsida</taxon>
        <taxon>eudicotyledons</taxon>
        <taxon>Gunneridae</taxon>
        <taxon>Pentapetalae</taxon>
        <taxon>rosids</taxon>
        <taxon>malvids</taxon>
        <taxon>Brassicales</taxon>
        <taxon>Brassicaceae</taxon>
        <taxon>Camelineae</taxon>
        <taxon>Arabidopsis</taxon>
    </lineage>
</organism>
<evidence type="ECO:0000255" key="1"/>
<evidence type="ECO:0000255" key="2">
    <source>
        <dbReference type="PROSITE-ProRule" id="PRU00498"/>
    </source>
</evidence>
<evidence type="ECO:0000255" key="3">
    <source>
        <dbReference type="PROSITE-ProRule" id="PRU00818"/>
    </source>
</evidence>
<evidence type="ECO:0000269" key="4">
    <source>
    </source>
</evidence>
<evidence type="ECO:0000269" key="5">
    <source>
    </source>
</evidence>
<evidence type="ECO:0000269" key="6">
    <source>
    </source>
</evidence>
<evidence type="ECO:0000303" key="7">
    <source>
    </source>
</evidence>
<evidence type="ECO:0000303" key="8">
    <source>
    </source>
</evidence>
<evidence type="ECO:0000303" key="9">
    <source>
    </source>
</evidence>
<evidence type="ECO:0000305" key="10"/>
<evidence type="ECO:0000312" key="11">
    <source>
        <dbReference type="Araport" id="AT2G25060"/>
    </source>
</evidence>
<evidence type="ECO:0000312" key="12">
    <source>
        <dbReference type="EMBL" id="AAD23007.1"/>
    </source>
</evidence>
<sequence length="182" mass="19482">MFLSASMASSSLHVAIFSLIFLFSLAAANEVTVGGKSGDWKIPPSSSYSFTEWAQKARFKVGDFIVFRYESGKDSVLEVTKEAYNSCNTTNPLANYTDGETKVKLDRSGPFYFISGANGHCEKGQKLSLVVISPRHSVISPAPSPVEFEDGPALAPAPISGSVRLGGCYVVLGLVLGLCAWF</sequence>
<reference key="1">
    <citation type="journal article" date="1999" name="Nature">
        <title>Sequence and analysis of chromosome 2 of the plant Arabidopsis thaliana.</title>
        <authorList>
            <person name="Lin X."/>
            <person name="Kaul S."/>
            <person name="Rounsley S.D."/>
            <person name="Shea T.P."/>
            <person name="Benito M.-I."/>
            <person name="Town C.D."/>
            <person name="Fujii C.Y."/>
            <person name="Mason T.M."/>
            <person name="Bowman C.L."/>
            <person name="Barnstead M.E."/>
            <person name="Feldblyum T.V."/>
            <person name="Buell C.R."/>
            <person name="Ketchum K.A."/>
            <person name="Lee J.J."/>
            <person name="Ronning C.M."/>
            <person name="Koo H.L."/>
            <person name="Moffat K.S."/>
            <person name="Cronin L.A."/>
            <person name="Shen M."/>
            <person name="Pai G."/>
            <person name="Van Aken S."/>
            <person name="Umayam L."/>
            <person name="Tallon L.J."/>
            <person name="Gill J.E."/>
            <person name="Adams M.D."/>
            <person name="Carrera A.J."/>
            <person name="Creasy T.H."/>
            <person name="Goodman H.M."/>
            <person name="Somerville C.R."/>
            <person name="Copenhaver G.P."/>
            <person name="Preuss D."/>
            <person name="Nierman W.C."/>
            <person name="White O."/>
            <person name="Eisen J.A."/>
            <person name="Salzberg S.L."/>
            <person name="Fraser C.M."/>
            <person name="Venter J.C."/>
        </authorList>
    </citation>
    <scope>NUCLEOTIDE SEQUENCE [LARGE SCALE GENOMIC DNA]</scope>
    <source>
        <strain>cv. Columbia</strain>
    </source>
</reference>
<reference key="2">
    <citation type="journal article" date="2017" name="Plant J.">
        <title>Araport11: a complete reannotation of the Arabidopsis thaliana reference genome.</title>
        <authorList>
            <person name="Cheng C.Y."/>
            <person name="Krishnakumar V."/>
            <person name="Chan A.P."/>
            <person name="Thibaud-Nissen F."/>
            <person name="Schobel S."/>
            <person name="Town C.D."/>
        </authorList>
    </citation>
    <scope>GENOME REANNOTATION</scope>
    <source>
        <strain>cv. Columbia</strain>
    </source>
</reference>
<reference key="3">
    <citation type="submission" date="2004-09" db="EMBL/GenBank/DDBJ databases">
        <title>Large-scale analysis of RIKEN Arabidopsis full-length (RAFL) cDNAs.</title>
        <authorList>
            <person name="Totoki Y."/>
            <person name="Seki M."/>
            <person name="Ishida J."/>
            <person name="Nakajima M."/>
            <person name="Enju A."/>
            <person name="Kamiya A."/>
            <person name="Narusaka M."/>
            <person name="Shin-i T."/>
            <person name="Nakagawa M."/>
            <person name="Sakamoto N."/>
            <person name="Oishi K."/>
            <person name="Kohara Y."/>
            <person name="Kobayashi M."/>
            <person name="Toyoda A."/>
            <person name="Sakaki Y."/>
            <person name="Sakurai T."/>
            <person name="Iida K."/>
            <person name="Akiyama K."/>
            <person name="Satou M."/>
            <person name="Toyoda T."/>
            <person name="Konagaya A."/>
            <person name="Carninci P."/>
            <person name="Kawai J."/>
            <person name="Hayashizaki Y."/>
            <person name="Shinozaki K."/>
        </authorList>
    </citation>
    <scope>NUCLEOTIDE SEQUENCE [LARGE SCALE MRNA]</scope>
    <source>
        <strain>cv. Columbia</strain>
    </source>
</reference>
<reference key="4">
    <citation type="journal article" date="2003" name="Science">
        <title>Empirical analysis of transcriptional activity in the Arabidopsis genome.</title>
        <authorList>
            <person name="Yamada K."/>
            <person name="Lim J."/>
            <person name="Dale J.M."/>
            <person name="Chen H."/>
            <person name="Shinn P."/>
            <person name="Palm C.J."/>
            <person name="Southwick A.M."/>
            <person name="Wu H.C."/>
            <person name="Kim C.J."/>
            <person name="Nguyen M."/>
            <person name="Pham P.K."/>
            <person name="Cheuk R.F."/>
            <person name="Karlin-Newmann G."/>
            <person name="Liu S.X."/>
            <person name="Lam B."/>
            <person name="Sakano H."/>
            <person name="Wu T."/>
            <person name="Yu G."/>
            <person name="Miranda M."/>
            <person name="Quach H.L."/>
            <person name="Tripp M."/>
            <person name="Chang C.H."/>
            <person name="Lee J.M."/>
            <person name="Toriumi M.J."/>
            <person name="Chan M.M."/>
            <person name="Tang C.C."/>
            <person name="Onodera C.S."/>
            <person name="Deng J.M."/>
            <person name="Akiyama K."/>
            <person name="Ansari Y."/>
            <person name="Arakawa T."/>
            <person name="Banh J."/>
            <person name="Banno F."/>
            <person name="Bowser L."/>
            <person name="Brooks S.Y."/>
            <person name="Carninci P."/>
            <person name="Chao Q."/>
            <person name="Choy N."/>
            <person name="Enju A."/>
            <person name="Goldsmith A.D."/>
            <person name="Gurjal M."/>
            <person name="Hansen N.F."/>
            <person name="Hayashizaki Y."/>
            <person name="Johnson-Hopson C."/>
            <person name="Hsuan V.W."/>
            <person name="Iida K."/>
            <person name="Karnes M."/>
            <person name="Khan S."/>
            <person name="Koesema E."/>
            <person name="Ishida J."/>
            <person name="Jiang P.X."/>
            <person name="Jones T."/>
            <person name="Kawai J."/>
            <person name="Kamiya A."/>
            <person name="Meyers C."/>
            <person name="Nakajima M."/>
            <person name="Narusaka M."/>
            <person name="Seki M."/>
            <person name="Sakurai T."/>
            <person name="Satou M."/>
            <person name="Tamse R."/>
            <person name="Vaysberg M."/>
            <person name="Wallender E.K."/>
            <person name="Wong C."/>
            <person name="Yamamura Y."/>
            <person name="Yuan S."/>
            <person name="Shinozaki K."/>
            <person name="Davis R.W."/>
            <person name="Theologis A."/>
            <person name="Ecker J.R."/>
        </authorList>
    </citation>
    <scope>NUCLEOTIDE SEQUENCE [LARGE SCALE MRNA] OF 7-182</scope>
    <source>
        <strain>cv. Columbia</strain>
    </source>
</reference>
<reference key="5">
    <citation type="journal article" date="2003" name="Plant Physiol.">
        <title>Identification of glycosylphosphatidylinositol-anchored proteins in Arabidopsis. A proteomic and genomic analysis.</title>
        <authorList>
            <person name="Borner G.H.H."/>
            <person name="Lilley K.S."/>
            <person name="Stevens T.J."/>
            <person name="Dupree P."/>
        </authorList>
    </citation>
    <scope>GPI-ANCHOR</scope>
    <scope>IDENTIFICATION BY MASS SPECTROMETRY</scope>
    <scope>GENE FAMILY</scope>
    <source>
        <strain>cv. Columbia</strain>
    </source>
</reference>
<reference key="6">
    <citation type="journal article" date="2009" name="Biosci. Biotechnol. Biochem.">
        <title>Genome-wide identification, structure and expression studies, and mutant collection of 22 early nodulin-like protein genes in Arabidopsis.</title>
        <authorList>
            <person name="Mashiguchi K."/>
            <person name="Asami T."/>
            <person name="Suzuki Y."/>
        </authorList>
    </citation>
    <scope>TISSUE SPECIFICITY</scope>
    <scope>GENE FAMILY</scope>
    <scope>NOMENCLATURE</scope>
    <source>
        <strain>cv. Columbia</strain>
    </source>
</reference>
<reference key="7">
    <citation type="journal article" date="2014" name="Plant Cell Physiol.">
        <title>Emerging functions of nodulin-like proteins in non-nodulating plant species.</title>
        <authorList>
            <person name="Denance N."/>
            <person name="Szurek B."/>
            <person name="Noel L.D."/>
        </authorList>
    </citation>
    <scope>REVIEW ON NODULIN-LIKE PROTEINS</scope>
</reference>
<reference key="8">
    <citation type="journal article" date="2016" name="Curr. Biol.">
        <title>Maternal ENODLs are required for pollen tube reception in Arabidopsis.</title>
        <authorList>
            <person name="Hou Y."/>
            <person name="Guo X."/>
            <person name="Cyprys P."/>
            <person name="Zhang Y."/>
            <person name="Bleckmann A."/>
            <person name="Cai L."/>
            <person name="Huang Q."/>
            <person name="Luo Y."/>
            <person name="Gu H."/>
            <person name="Dresselhaus T."/>
            <person name="Dong J."/>
            <person name="Qu L.-J."/>
        </authorList>
    </citation>
    <scope>FUNCTION</scope>
    <scope>DISRUPTION PHENOTYPE</scope>
    <scope>INTERACTION WITH FERONIA</scope>
    <scope>DEVELOPMENTAL STAGE</scope>
</reference>
<proteinExistence type="evidence at protein level"/>
<comment type="function">
    <text evidence="6 9">May act as a carbohydrate transporter (PubMed:24470637). Required, together with ENODL11, ENODL12, ENODL13, ENODL14 and ENODL15, for male-female communication and pollen tube reception and burst at the synergid cell surface of the female gametophyte (PubMed:27524487).</text>
</comment>
<comment type="subunit">
    <text evidence="6">Interacts strongly and specifically with the extracellular domain of FERONIA at the synergid cell surface.</text>
</comment>
<comment type="subcellular location">
    <subcellularLocation>
        <location evidence="1">Cell membrane</location>
        <topology evidence="4">Lipid-anchor</topology>
        <topology evidence="4">GPI-anchor</topology>
    </subcellularLocation>
</comment>
<comment type="tissue specificity">
    <text evidence="5">Mostly expressed in seedlings and flowers, and, to a lower extent, in roots, stems and seeds, but barely in leaves.</text>
</comment>
<comment type="developmental stage">
    <text evidence="6">In inflorescences, accumulates mainly in mature pistils (PubMed:27524487). In developing ovules, observed at the micropylar region in a polarized localization of the synergid cells and in inner integument surrounding the female gametophytes (at protein level) (PubMed:27524487). In mature ovules, present in the filiform apparatus and in the integuments at the micropylar region (PubMed:27524487). Levels fade out in ovules after pollination and subsequent fertilization (PubMed:27524487).</text>
</comment>
<comment type="disruption phenotype">
    <text evidence="6">No visible phenotype (PubMed:27524487). Plants lacking ENODL11, ENODL12, ENODL13, ENODL14 and ENODL15 have a reduced seed set due to aborted ovules as a result of pollen tubes failling to rupture and release their sperm cell cargo (PubMed:27524487).</text>
</comment>
<comment type="similarity">
    <text evidence="10">Belongs to the early nodulin-like (ENODL) family.</text>
</comment>
<comment type="sequence caution" evidence="10">
    <conflict type="erroneous initiation">
        <sequence resource="EMBL-CDS" id="AAD23007"/>
    </conflict>
    <text>Truncated N-terminus.</text>
</comment>
<protein>
    <recommendedName>
        <fullName evidence="8">Early nodulin-like protein 14</fullName>
        <shortName evidence="8">AtENODL14</shortName>
    </recommendedName>
    <alternativeName>
        <fullName evidence="7">Early nodulin like protein 1</fullName>
    </alternativeName>
    <alternativeName>
        <fullName evidence="10">Phytocyanin-like protein ENODL14</fullName>
    </alternativeName>
</protein>
<feature type="signal peptide" evidence="1">
    <location>
        <begin position="1"/>
        <end position="28"/>
    </location>
</feature>
<feature type="chain" id="PRO_0000002878" description="Early nodulin-like protein 14">
    <location>
        <begin position="29"/>
        <end position="160"/>
    </location>
</feature>
<feature type="propeptide" id="PRO_0000002879" description="Removed in mature form" evidence="1">
    <location>
        <begin position="161"/>
        <end position="182"/>
    </location>
</feature>
<feature type="domain" description="Phytocyanin" evidence="3">
    <location>
        <begin position="29"/>
        <end position="133"/>
    </location>
</feature>
<feature type="lipid moiety-binding region" description="GPI-anchor amidated serine" evidence="1">
    <location>
        <position position="160"/>
    </location>
</feature>
<feature type="glycosylation site" description="N-linked (GlcNAc...) asparagine" evidence="2">
    <location>
        <position position="88"/>
    </location>
</feature>
<feature type="glycosylation site" description="N-linked (GlcNAc...) asparagine" evidence="2">
    <location>
        <position position="95"/>
    </location>
</feature>
<feature type="disulfide bond" evidence="3">
    <location>
        <begin position="87"/>
        <end position="121"/>
    </location>
</feature>
<accession>Q9SK27</accession>
<accession>Q680Y2</accession>
<name>ENL14_ARATH</name>
<gene>
    <name evidence="8" type="primary">ENODL14</name>
    <name evidence="8" type="synonym">EN14</name>
    <name evidence="11" type="ordered locus">At2g25060</name>
    <name evidence="12" type="ORF">F27C12.2</name>
</gene>
<keyword id="KW-1003">Cell membrane</keyword>
<keyword id="KW-1015">Disulfide bond</keyword>
<keyword id="KW-0325">Glycoprotein</keyword>
<keyword id="KW-0336">GPI-anchor</keyword>
<keyword id="KW-0449">Lipoprotein</keyword>
<keyword id="KW-0472">Membrane</keyword>
<keyword id="KW-1185">Reference proteome</keyword>
<keyword id="KW-0732">Signal</keyword>
<dbReference type="EMBL" id="AC006585">
    <property type="protein sequence ID" value="AAD23007.1"/>
    <property type="status" value="ALT_INIT"/>
    <property type="molecule type" value="Genomic_DNA"/>
</dbReference>
<dbReference type="EMBL" id="CP002685">
    <property type="protein sequence ID" value="AEC07653.1"/>
    <property type="molecule type" value="Genomic_DNA"/>
</dbReference>
<dbReference type="EMBL" id="AK175735">
    <property type="protein sequence ID" value="BAD43498.1"/>
    <property type="molecule type" value="mRNA"/>
</dbReference>
<dbReference type="EMBL" id="AK176818">
    <property type="protein sequence ID" value="BAD44581.1"/>
    <property type="molecule type" value="mRNA"/>
</dbReference>
<dbReference type="EMBL" id="AK175700">
    <property type="protein sequence ID" value="BAD43463.1"/>
    <property type="molecule type" value="mRNA"/>
</dbReference>
<dbReference type="EMBL" id="BT010405">
    <property type="protein sequence ID" value="AAQ62406.1"/>
    <property type="molecule type" value="mRNA"/>
</dbReference>
<dbReference type="PIR" id="G84643">
    <property type="entry name" value="G84643"/>
</dbReference>
<dbReference type="RefSeq" id="NP_180078.2">
    <property type="nucleotide sequence ID" value="NM_128063.5"/>
</dbReference>
<dbReference type="SMR" id="Q9SK27"/>
<dbReference type="FunCoup" id="Q9SK27">
    <property type="interactions" value="129"/>
</dbReference>
<dbReference type="STRING" id="3702.Q9SK27"/>
<dbReference type="GlyGen" id="Q9SK27">
    <property type="glycosylation" value="2 sites"/>
</dbReference>
<dbReference type="PaxDb" id="3702-AT2G25060.1"/>
<dbReference type="ProteomicsDB" id="222634"/>
<dbReference type="EnsemblPlants" id="AT2G25060.1">
    <property type="protein sequence ID" value="AT2G25060.1"/>
    <property type="gene ID" value="AT2G25060"/>
</dbReference>
<dbReference type="GeneID" id="817044"/>
<dbReference type="Gramene" id="AT2G25060.1">
    <property type="protein sequence ID" value="AT2G25060.1"/>
    <property type="gene ID" value="AT2G25060"/>
</dbReference>
<dbReference type="KEGG" id="ath:AT2G25060"/>
<dbReference type="Araport" id="AT2G25060"/>
<dbReference type="TAIR" id="AT2G25060">
    <property type="gene designation" value="ENODL14"/>
</dbReference>
<dbReference type="eggNOG" id="ENOG502RZS4">
    <property type="taxonomic scope" value="Eukaryota"/>
</dbReference>
<dbReference type="HOGENOM" id="CLU_058719_1_2_1"/>
<dbReference type="InParanoid" id="Q9SK27"/>
<dbReference type="OMA" id="TRDDYNH"/>
<dbReference type="PhylomeDB" id="Q9SK27"/>
<dbReference type="PRO" id="PR:Q9SK27"/>
<dbReference type="Proteomes" id="UP000006548">
    <property type="component" value="Chromosome 2"/>
</dbReference>
<dbReference type="ExpressionAtlas" id="Q9SK27">
    <property type="expression patterns" value="baseline and differential"/>
</dbReference>
<dbReference type="GO" id="GO:0005886">
    <property type="term" value="C:plasma membrane"/>
    <property type="evidence" value="ECO:0007005"/>
    <property type="project" value="TAIR"/>
</dbReference>
<dbReference type="GO" id="GO:0009506">
    <property type="term" value="C:plasmodesma"/>
    <property type="evidence" value="ECO:0007005"/>
    <property type="project" value="TAIR"/>
</dbReference>
<dbReference type="GO" id="GO:0099503">
    <property type="term" value="C:secretory vesicle"/>
    <property type="evidence" value="ECO:0007005"/>
    <property type="project" value="TAIR"/>
</dbReference>
<dbReference type="GO" id="GO:0098552">
    <property type="term" value="C:side of membrane"/>
    <property type="evidence" value="ECO:0007669"/>
    <property type="project" value="UniProtKB-KW"/>
</dbReference>
<dbReference type="GO" id="GO:0005773">
    <property type="term" value="C:vacuole"/>
    <property type="evidence" value="ECO:0007005"/>
    <property type="project" value="TAIR"/>
</dbReference>
<dbReference type="GO" id="GO:0009055">
    <property type="term" value="F:electron transfer activity"/>
    <property type="evidence" value="ECO:0007669"/>
    <property type="project" value="InterPro"/>
</dbReference>
<dbReference type="CDD" id="cd11019">
    <property type="entry name" value="OsENODL1_like"/>
    <property type="match status" value="1"/>
</dbReference>
<dbReference type="FunFam" id="2.60.40.420:FF:000069">
    <property type="entry name" value="Early nodulin-like protein 1"/>
    <property type="match status" value="1"/>
</dbReference>
<dbReference type="Gene3D" id="2.60.40.420">
    <property type="entry name" value="Cupredoxins - blue copper proteins"/>
    <property type="match status" value="1"/>
</dbReference>
<dbReference type="InterPro" id="IPR008972">
    <property type="entry name" value="Cupredoxin"/>
</dbReference>
<dbReference type="InterPro" id="IPR041846">
    <property type="entry name" value="ENL_dom"/>
</dbReference>
<dbReference type="InterPro" id="IPR039391">
    <property type="entry name" value="Phytocyanin-like"/>
</dbReference>
<dbReference type="InterPro" id="IPR003245">
    <property type="entry name" value="Phytocyanin_dom"/>
</dbReference>
<dbReference type="PANTHER" id="PTHR33021">
    <property type="entry name" value="BLUE COPPER PROTEIN"/>
    <property type="match status" value="1"/>
</dbReference>
<dbReference type="PANTHER" id="PTHR33021:SF420">
    <property type="entry name" value="EARLY NODULIN-LIKE PROTEIN 14"/>
    <property type="match status" value="1"/>
</dbReference>
<dbReference type="Pfam" id="PF02298">
    <property type="entry name" value="Cu_bind_like"/>
    <property type="match status" value="1"/>
</dbReference>
<dbReference type="SUPFAM" id="SSF49503">
    <property type="entry name" value="Cupredoxins"/>
    <property type="match status" value="1"/>
</dbReference>
<dbReference type="PROSITE" id="PS51485">
    <property type="entry name" value="PHYTOCYANIN"/>
    <property type="match status" value="1"/>
</dbReference>